<reference key="1">
    <citation type="journal article" date="2007" name="J. Bacteriol.">
        <title>The complete genome sequence of Roseobacter denitrificans reveals a mixotrophic rather than photosynthetic metabolism.</title>
        <authorList>
            <person name="Swingley W.D."/>
            <person name="Sadekar S."/>
            <person name="Mastrian S.D."/>
            <person name="Matthies H.J."/>
            <person name="Hao J."/>
            <person name="Ramos H."/>
            <person name="Acharya C.R."/>
            <person name="Conrad A.L."/>
            <person name="Taylor H.L."/>
            <person name="Dejesa L.C."/>
            <person name="Shah M.K."/>
            <person name="O'Huallachain M.E."/>
            <person name="Lince M.T."/>
            <person name="Blankenship R.E."/>
            <person name="Beatty J.T."/>
            <person name="Touchman J.W."/>
        </authorList>
    </citation>
    <scope>NUCLEOTIDE SEQUENCE [LARGE SCALE GENOMIC DNA]</scope>
    <source>
        <strain>ATCC 33942 / OCh 114</strain>
    </source>
</reference>
<dbReference type="EC" id="1.11.1.21" evidence="1"/>
<dbReference type="EMBL" id="CP000362">
    <property type="protein sequence ID" value="ABG31790.1"/>
    <property type="molecule type" value="Genomic_DNA"/>
</dbReference>
<dbReference type="RefSeq" id="WP_011568407.1">
    <property type="nucleotide sequence ID" value="NC_008209.1"/>
</dbReference>
<dbReference type="SMR" id="Q167Q3"/>
<dbReference type="STRING" id="375451.RD1_2195"/>
<dbReference type="KEGG" id="rde:RD1_2195"/>
<dbReference type="eggNOG" id="COG0376">
    <property type="taxonomic scope" value="Bacteria"/>
</dbReference>
<dbReference type="HOGENOM" id="CLU_025424_2_0_5"/>
<dbReference type="OrthoDB" id="9759743at2"/>
<dbReference type="Proteomes" id="UP000007029">
    <property type="component" value="Chromosome"/>
</dbReference>
<dbReference type="GO" id="GO:0005829">
    <property type="term" value="C:cytosol"/>
    <property type="evidence" value="ECO:0007669"/>
    <property type="project" value="TreeGrafter"/>
</dbReference>
<dbReference type="GO" id="GO:0004096">
    <property type="term" value="F:catalase activity"/>
    <property type="evidence" value="ECO:0007669"/>
    <property type="project" value="UniProtKB-UniRule"/>
</dbReference>
<dbReference type="GO" id="GO:0020037">
    <property type="term" value="F:heme binding"/>
    <property type="evidence" value="ECO:0007669"/>
    <property type="project" value="InterPro"/>
</dbReference>
<dbReference type="GO" id="GO:0046872">
    <property type="term" value="F:metal ion binding"/>
    <property type="evidence" value="ECO:0007669"/>
    <property type="project" value="UniProtKB-KW"/>
</dbReference>
<dbReference type="GO" id="GO:0070301">
    <property type="term" value="P:cellular response to hydrogen peroxide"/>
    <property type="evidence" value="ECO:0007669"/>
    <property type="project" value="TreeGrafter"/>
</dbReference>
<dbReference type="GO" id="GO:0042744">
    <property type="term" value="P:hydrogen peroxide catabolic process"/>
    <property type="evidence" value="ECO:0007669"/>
    <property type="project" value="UniProtKB-KW"/>
</dbReference>
<dbReference type="CDD" id="cd00649">
    <property type="entry name" value="catalase_peroxidase_1"/>
    <property type="match status" value="1"/>
</dbReference>
<dbReference type="CDD" id="cd08200">
    <property type="entry name" value="catalase_peroxidase_2"/>
    <property type="match status" value="1"/>
</dbReference>
<dbReference type="FunFam" id="1.10.420.10:FF:000004">
    <property type="entry name" value="Catalase-peroxidase"/>
    <property type="match status" value="1"/>
</dbReference>
<dbReference type="FunFam" id="1.10.520.10:FF:000002">
    <property type="entry name" value="Catalase-peroxidase"/>
    <property type="match status" value="1"/>
</dbReference>
<dbReference type="Gene3D" id="1.10.520.10">
    <property type="match status" value="2"/>
</dbReference>
<dbReference type="Gene3D" id="1.10.420.10">
    <property type="entry name" value="Peroxidase, domain 2"/>
    <property type="match status" value="2"/>
</dbReference>
<dbReference type="HAMAP" id="MF_01961">
    <property type="entry name" value="Catal_peroxid"/>
    <property type="match status" value="1"/>
</dbReference>
<dbReference type="InterPro" id="IPR000763">
    <property type="entry name" value="Catalase_peroxidase"/>
</dbReference>
<dbReference type="InterPro" id="IPR002016">
    <property type="entry name" value="Haem_peroxidase"/>
</dbReference>
<dbReference type="InterPro" id="IPR010255">
    <property type="entry name" value="Haem_peroxidase_sf"/>
</dbReference>
<dbReference type="InterPro" id="IPR019794">
    <property type="entry name" value="Peroxidases_AS"/>
</dbReference>
<dbReference type="NCBIfam" id="TIGR00198">
    <property type="entry name" value="cat_per_HPI"/>
    <property type="match status" value="1"/>
</dbReference>
<dbReference type="NCBIfam" id="NF011635">
    <property type="entry name" value="PRK15061.1"/>
    <property type="match status" value="1"/>
</dbReference>
<dbReference type="PANTHER" id="PTHR30555:SF6">
    <property type="entry name" value="CATALASE-PEROXIDASE"/>
    <property type="match status" value="1"/>
</dbReference>
<dbReference type="PANTHER" id="PTHR30555">
    <property type="entry name" value="HYDROPEROXIDASE I, BIFUNCTIONAL CATALASE-PEROXIDASE"/>
    <property type="match status" value="1"/>
</dbReference>
<dbReference type="Pfam" id="PF00141">
    <property type="entry name" value="peroxidase"/>
    <property type="match status" value="2"/>
</dbReference>
<dbReference type="PRINTS" id="PR00460">
    <property type="entry name" value="BPEROXIDASE"/>
</dbReference>
<dbReference type="PRINTS" id="PR00458">
    <property type="entry name" value="PEROXIDASE"/>
</dbReference>
<dbReference type="SUPFAM" id="SSF48113">
    <property type="entry name" value="Heme-dependent peroxidases"/>
    <property type="match status" value="2"/>
</dbReference>
<dbReference type="PROSITE" id="PS00436">
    <property type="entry name" value="PEROXIDASE_2"/>
    <property type="match status" value="1"/>
</dbReference>
<dbReference type="PROSITE" id="PS50873">
    <property type="entry name" value="PEROXIDASE_4"/>
    <property type="match status" value="1"/>
</dbReference>
<protein>
    <recommendedName>
        <fullName evidence="1">Catalase-peroxidase</fullName>
        <shortName evidence="1">CP</shortName>
        <ecNumber evidence="1">1.11.1.21</ecNumber>
    </recommendedName>
    <alternativeName>
        <fullName evidence="1">Peroxidase/catalase</fullName>
    </alternativeName>
</protein>
<sequence length="726" mass="79400">MDGNNVDPTGGCPVMHGGNTAMDKPVTKWWPNALNLDILHQHGARTNPMDPDYDHRAAVKALDFEAVKADVKALMTQDQDWWPADWGHYGGLMIRLAWHSAGTYRMQDGRGGAGSGNIRFAPLNSWPDNASLDKARRLLWPVKKKYGNALSWADLIILSGNMAYESMGLKTFGFGFGREDIWGPETDVYWGSENEWLAPSENRYGDLDDASTLENPLAAVHMGLIYVNPEGVNGQPDPARTAQHVRETFARMAMDDEETAALTCGGHTVGKAHGRGAVDNIGVEPEAAGIEAQGFGWSNPRHDGKATNAFTSGIEGAWTTHPTQWDMGYFKLLFGYEWQLTKSPAGAWQWEPIDIKEEDMPVDPTDPSKRHQPMMTDADMAMKVDPIYNEICQKFMADPEYFADVFGRAWFKLTHRDMGPKACYIGPDVPAEDLIWQDPIPAGSTEYDVAAVKARIADSGLSAADMIATAWDSARTFRGSDKRGGANGARIRLAPQKDWAGNEPERLAKVLGILEPIAAETGASVADVIVLAGNVGLEQSIKAAGYDVDVPFAQGRGDATADQTDAASFDVLEPLADGFRNWQKADYAVSAEEMMLDKAQLLGLTAAEMTVLVGGMRVLGVNHGNSKHGVFTDRAGQLTPDFFVNLTDMAYSWHPVDGENTYEIRDRATGAVKWTATSADLVFGSNSVLRAYAEVYAQDDNAEKFVRDFVAAWTKVMNADRFDLAA</sequence>
<keyword id="KW-0349">Heme</keyword>
<keyword id="KW-0376">Hydrogen peroxide</keyword>
<keyword id="KW-0408">Iron</keyword>
<keyword id="KW-0479">Metal-binding</keyword>
<keyword id="KW-0560">Oxidoreductase</keyword>
<keyword id="KW-0575">Peroxidase</keyword>
<keyword id="KW-1185">Reference proteome</keyword>
<evidence type="ECO:0000255" key="1">
    <source>
        <dbReference type="HAMAP-Rule" id="MF_01961"/>
    </source>
</evidence>
<gene>
    <name evidence="1" type="primary">katG</name>
    <name type="ordered locus">RD1_2195</name>
</gene>
<feature type="chain" id="PRO_0000354898" description="Catalase-peroxidase">
    <location>
        <begin position="1"/>
        <end position="726"/>
    </location>
</feature>
<feature type="active site" description="Proton acceptor" evidence="1">
    <location>
        <position position="99"/>
    </location>
</feature>
<feature type="binding site" description="axial binding residue" evidence="1">
    <location>
        <position position="267"/>
    </location>
    <ligand>
        <name>heme b</name>
        <dbReference type="ChEBI" id="CHEBI:60344"/>
    </ligand>
    <ligandPart>
        <name>Fe</name>
        <dbReference type="ChEBI" id="CHEBI:18248"/>
    </ligandPart>
</feature>
<feature type="site" description="Transition state stabilizer" evidence="1">
    <location>
        <position position="95"/>
    </location>
</feature>
<feature type="cross-link" description="Tryptophyl-tyrosyl-methioninium (Trp-Tyr) (with M-252)" evidence="1">
    <location>
        <begin position="98"/>
        <end position="226"/>
    </location>
</feature>
<feature type="cross-link" description="Tryptophyl-tyrosyl-methioninium (Tyr-Met) (with W-98)" evidence="1">
    <location>
        <begin position="226"/>
        <end position="252"/>
    </location>
</feature>
<name>KATG_ROSDO</name>
<proteinExistence type="inferred from homology"/>
<comment type="function">
    <text evidence="1">Bifunctional enzyme with both catalase and broad-spectrum peroxidase activity.</text>
</comment>
<comment type="catalytic activity">
    <reaction evidence="1">
        <text>H2O2 + AH2 = A + 2 H2O</text>
        <dbReference type="Rhea" id="RHEA:30275"/>
        <dbReference type="ChEBI" id="CHEBI:13193"/>
        <dbReference type="ChEBI" id="CHEBI:15377"/>
        <dbReference type="ChEBI" id="CHEBI:16240"/>
        <dbReference type="ChEBI" id="CHEBI:17499"/>
        <dbReference type="EC" id="1.11.1.21"/>
    </reaction>
</comment>
<comment type="catalytic activity">
    <reaction evidence="1">
        <text>2 H2O2 = O2 + 2 H2O</text>
        <dbReference type="Rhea" id="RHEA:20309"/>
        <dbReference type="ChEBI" id="CHEBI:15377"/>
        <dbReference type="ChEBI" id="CHEBI:15379"/>
        <dbReference type="ChEBI" id="CHEBI:16240"/>
        <dbReference type="EC" id="1.11.1.21"/>
    </reaction>
</comment>
<comment type="cofactor">
    <cofactor evidence="1">
        <name>heme b</name>
        <dbReference type="ChEBI" id="CHEBI:60344"/>
    </cofactor>
    <text evidence="1">Binds 1 heme b (iron(II)-protoporphyrin IX) group per dimer.</text>
</comment>
<comment type="subunit">
    <text evidence="1">Homodimer or homotetramer.</text>
</comment>
<comment type="PTM">
    <text evidence="1">Formation of the three residue Trp-Tyr-Met cross-link is important for the catalase, but not the peroxidase activity of the enzyme.</text>
</comment>
<comment type="similarity">
    <text evidence="1">Belongs to the peroxidase family. Peroxidase/catalase subfamily.</text>
</comment>
<organism>
    <name type="scientific">Roseobacter denitrificans (strain ATCC 33942 / OCh 114)</name>
    <name type="common">Erythrobacter sp. (strain OCh 114)</name>
    <name type="synonym">Roseobacter denitrificans</name>
    <dbReference type="NCBI Taxonomy" id="375451"/>
    <lineage>
        <taxon>Bacteria</taxon>
        <taxon>Pseudomonadati</taxon>
        <taxon>Pseudomonadota</taxon>
        <taxon>Alphaproteobacteria</taxon>
        <taxon>Rhodobacterales</taxon>
        <taxon>Roseobacteraceae</taxon>
        <taxon>Roseobacter</taxon>
    </lineage>
</organism>
<accession>Q167Q3</accession>